<accession>A9I4I5</accession>
<sequence length="576" mass="63608">MRASTYHLNTLKEAPAEAEVASHRLMTRAGMIRKLAGGIYTYMPLGLKVIRKIEAIVRAEMDAAGAIELLMPVVQPAELWQESGRWEQYGAELLRIKDRHQRDFVLQPTSEEVITDIARNEIHSYRQLPLNFYHIQTKFRDERRPRFGLMRGREFTMKDAYSFDRDEAGAQQSYDKMYDAYMRIFERLGLQFRAVAADTGSIGGSRSHEFQVIADTGEDLLVYNPDSQYAANIELAEAPALLAERAAATQPLEAVPTPGAAKCADVAKLLGLPLERTLKSIVLATEPEPGKVQVWLLLLRGDHELNEIKAGKLPGLAGFRFATEDEIVAHFGCKPGYLGPIGTALPVRVVADRTVANMADFVCGANREDFHYQGANWGRDLPEPELVADLRNVVEGDPAPDGAGRLAIQRGIEVGHVFFLGTKYSEALKATFLDETGKPALLQMGCYGIGITRIAGAAIEQNHDERGIIWPRAIAPFEVVICPVGWGKNETVRNESVKLYDALRARGVDVILDDRDARPGVMFAEWELIGVPLRVTVGERGLNDGVVELQARRESTAAKIPAGSALEQVLAKLETL</sequence>
<protein>
    <recommendedName>
        <fullName evidence="1">Proline--tRNA ligase</fullName>
        <ecNumber evidence="1">6.1.1.15</ecNumber>
    </recommendedName>
    <alternativeName>
        <fullName evidence="1">Prolyl-tRNA synthetase</fullName>
        <shortName evidence="1">ProRS</shortName>
    </alternativeName>
</protein>
<reference key="1">
    <citation type="journal article" date="2008" name="BMC Genomics">
        <title>The missing link: Bordetella petrii is endowed with both the metabolic versatility of environmental bacteria and virulence traits of pathogenic Bordetellae.</title>
        <authorList>
            <person name="Gross R."/>
            <person name="Guzman C.A."/>
            <person name="Sebaihia M."/>
            <person name="Martin dos Santos V.A.P."/>
            <person name="Pieper D.H."/>
            <person name="Koebnik R."/>
            <person name="Lechner M."/>
            <person name="Bartels D."/>
            <person name="Buhrmester J."/>
            <person name="Choudhuri J.V."/>
            <person name="Ebensen T."/>
            <person name="Gaigalat L."/>
            <person name="Herrmann S."/>
            <person name="Khachane A.N."/>
            <person name="Larisch C."/>
            <person name="Link S."/>
            <person name="Linke B."/>
            <person name="Meyer F."/>
            <person name="Mormann S."/>
            <person name="Nakunst D."/>
            <person name="Rueckert C."/>
            <person name="Schneiker-Bekel S."/>
            <person name="Schulze K."/>
            <person name="Voerholter F.-J."/>
            <person name="Yevsa T."/>
            <person name="Engle J.T."/>
            <person name="Goldman W.E."/>
            <person name="Puehler A."/>
            <person name="Goebel U.B."/>
            <person name="Goesmann A."/>
            <person name="Bloecker H."/>
            <person name="Kaiser O."/>
            <person name="Martinez-Arias R."/>
        </authorList>
    </citation>
    <scope>NUCLEOTIDE SEQUENCE [LARGE SCALE GENOMIC DNA]</scope>
    <source>
        <strain>ATCC BAA-461 / DSM 12804 / CCUG 43448</strain>
    </source>
</reference>
<organism>
    <name type="scientific">Bordetella petrii (strain ATCC BAA-461 / DSM 12804 / CCUG 43448)</name>
    <dbReference type="NCBI Taxonomy" id="340100"/>
    <lineage>
        <taxon>Bacteria</taxon>
        <taxon>Pseudomonadati</taxon>
        <taxon>Pseudomonadota</taxon>
        <taxon>Betaproteobacteria</taxon>
        <taxon>Burkholderiales</taxon>
        <taxon>Alcaligenaceae</taxon>
        <taxon>Bordetella</taxon>
    </lineage>
</organism>
<proteinExistence type="inferred from homology"/>
<gene>
    <name evidence="1" type="primary">proS</name>
    <name type="ordered locus">Bpet0663</name>
</gene>
<keyword id="KW-0030">Aminoacyl-tRNA synthetase</keyword>
<keyword id="KW-0067">ATP-binding</keyword>
<keyword id="KW-0963">Cytoplasm</keyword>
<keyword id="KW-0436">Ligase</keyword>
<keyword id="KW-0547">Nucleotide-binding</keyword>
<keyword id="KW-0648">Protein biosynthesis</keyword>
<dbReference type="EC" id="6.1.1.15" evidence="1"/>
<dbReference type="EMBL" id="AM902716">
    <property type="protein sequence ID" value="CAP40995.1"/>
    <property type="molecule type" value="Genomic_DNA"/>
</dbReference>
<dbReference type="SMR" id="A9I4I5"/>
<dbReference type="STRING" id="94624.Bpet0663"/>
<dbReference type="KEGG" id="bpt:Bpet0663"/>
<dbReference type="eggNOG" id="COG0442">
    <property type="taxonomic scope" value="Bacteria"/>
</dbReference>
<dbReference type="Proteomes" id="UP000001225">
    <property type="component" value="Chromosome"/>
</dbReference>
<dbReference type="GO" id="GO:0005829">
    <property type="term" value="C:cytosol"/>
    <property type="evidence" value="ECO:0007669"/>
    <property type="project" value="TreeGrafter"/>
</dbReference>
<dbReference type="GO" id="GO:0002161">
    <property type="term" value="F:aminoacyl-tRNA deacylase activity"/>
    <property type="evidence" value="ECO:0007669"/>
    <property type="project" value="InterPro"/>
</dbReference>
<dbReference type="GO" id="GO:0005524">
    <property type="term" value="F:ATP binding"/>
    <property type="evidence" value="ECO:0007669"/>
    <property type="project" value="UniProtKB-UniRule"/>
</dbReference>
<dbReference type="GO" id="GO:0004827">
    <property type="term" value="F:proline-tRNA ligase activity"/>
    <property type="evidence" value="ECO:0007669"/>
    <property type="project" value="UniProtKB-UniRule"/>
</dbReference>
<dbReference type="GO" id="GO:0006433">
    <property type="term" value="P:prolyl-tRNA aminoacylation"/>
    <property type="evidence" value="ECO:0007669"/>
    <property type="project" value="UniProtKB-UniRule"/>
</dbReference>
<dbReference type="CDD" id="cd04334">
    <property type="entry name" value="ProRS-INS"/>
    <property type="match status" value="1"/>
</dbReference>
<dbReference type="CDD" id="cd00861">
    <property type="entry name" value="ProRS_anticodon_short"/>
    <property type="match status" value="1"/>
</dbReference>
<dbReference type="CDD" id="cd00779">
    <property type="entry name" value="ProRS_core_prok"/>
    <property type="match status" value="1"/>
</dbReference>
<dbReference type="FunFam" id="3.30.930.10:FF:000012">
    <property type="entry name" value="Proline--tRNA ligase"/>
    <property type="match status" value="1"/>
</dbReference>
<dbReference type="FunFam" id="3.30.930.10:FF:000097">
    <property type="entry name" value="Proline--tRNA ligase"/>
    <property type="match status" value="1"/>
</dbReference>
<dbReference type="Gene3D" id="3.40.50.800">
    <property type="entry name" value="Anticodon-binding domain"/>
    <property type="match status" value="1"/>
</dbReference>
<dbReference type="Gene3D" id="3.30.930.10">
    <property type="entry name" value="Bira Bifunctional Protein, Domain 2"/>
    <property type="match status" value="2"/>
</dbReference>
<dbReference type="Gene3D" id="3.90.960.10">
    <property type="entry name" value="YbaK/aminoacyl-tRNA synthetase-associated domain"/>
    <property type="match status" value="1"/>
</dbReference>
<dbReference type="HAMAP" id="MF_01569">
    <property type="entry name" value="Pro_tRNA_synth_type1"/>
    <property type="match status" value="1"/>
</dbReference>
<dbReference type="InterPro" id="IPR002314">
    <property type="entry name" value="aa-tRNA-synt_IIb"/>
</dbReference>
<dbReference type="InterPro" id="IPR006195">
    <property type="entry name" value="aa-tRNA-synth_II"/>
</dbReference>
<dbReference type="InterPro" id="IPR045864">
    <property type="entry name" value="aa-tRNA-synth_II/BPL/LPL"/>
</dbReference>
<dbReference type="InterPro" id="IPR004154">
    <property type="entry name" value="Anticodon-bd"/>
</dbReference>
<dbReference type="InterPro" id="IPR036621">
    <property type="entry name" value="Anticodon-bd_dom_sf"/>
</dbReference>
<dbReference type="InterPro" id="IPR002316">
    <property type="entry name" value="Pro-tRNA-ligase_IIa"/>
</dbReference>
<dbReference type="InterPro" id="IPR004500">
    <property type="entry name" value="Pro-tRNA-synth_IIa_bac-type"/>
</dbReference>
<dbReference type="InterPro" id="IPR023717">
    <property type="entry name" value="Pro-tRNA-Synthase_IIa_type1"/>
</dbReference>
<dbReference type="InterPro" id="IPR050062">
    <property type="entry name" value="Pro-tRNA_synthetase"/>
</dbReference>
<dbReference type="InterPro" id="IPR044140">
    <property type="entry name" value="ProRS_anticodon_short"/>
</dbReference>
<dbReference type="InterPro" id="IPR033730">
    <property type="entry name" value="ProRS_core_prok"/>
</dbReference>
<dbReference type="InterPro" id="IPR036754">
    <property type="entry name" value="YbaK/aa-tRNA-synt-asso_dom_sf"/>
</dbReference>
<dbReference type="InterPro" id="IPR007214">
    <property type="entry name" value="YbaK/aa-tRNA-synth-assoc-dom"/>
</dbReference>
<dbReference type="NCBIfam" id="NF006625">
    <property type="entry name" value="PRK09194.1"/>
    <property type="match status" value="1"/>
</dbReference>
<dbReference type="NCBIfam" id="TIGR00409">
    <property type="entry name" value="proS_fam_II"/>
    <property type="match status" value="1"/>
</dbReference>
<dbReference type="PANTHER" id="PTHR42753">
    <property type="entry name" value="MITOCHONDRIAL RIBOSOME PROTEIN L39/PROLYL-TRNA LIGASE FAMILY MEMBER"/>
    <property type="match status" value="1"/>
</dbReference>
<dbReference type="PANTHER" id="PTHR42753:SF2">
    <property type="entry name" value="PROLINE--TRNA LIGASE"/>
    <property type="match status" value="1"/>
</dbReference>
<dbReference type="Pfam" id="PF03129">
    <property type="entry name" value="HGTP_anticodon"/>
    <property type="match status" value="1"/>
</dbReference>
<dbReference type="Pfam" id="PF00587">
    <property type="entry name" value="tRNA-synt_2b"/>
    <property type="match status" value="1"/>
</dbReference>
<dbReference type="Pfam" id="PF04073">
    <property type="entry name" value="tRNA_edit"/>
    <property type="match status" value="1"/>
</dbReference>
<dbReference type="PIRSF" id="PIRSF001535">
    <property type="entry name" value="ProRS_1"/>
    <property type="match status" value="1"/>
</dbReference>
<dbReference type="PRINTS" id="PR01046">
    <property type="entry name" value="TRNASYNTHPRO"/>
</dbReference>
<dbReference type="SUPFAM" id="SSF52954">
    <property type="entry name" value="Class II aaRS ABD-related"/>
    <property type="match status" value="1"/>
</dbReference>
<dbReference type="SUPFAM" id="SSF55681">
    <property type="entry name" value="Class II aaRS and biotin synthetases"/>
    <property type="match status" value="1"/>
</dbReference>
<dbReference type="SUPFAM" id="SSF55826">
    <property type="entry name" value="YbaK/ProRS associated domain"/>
    <property type="match status" value="1"/>
</dbReference>
<dbReference type="PROSITE" id="PS50862">
    <property type="entry name" value="AA_TRNA_LIGASE_II"/>
    <property type="match status" value="1"/>
</dbReference>
<name>SYP_BORPD</name>
<evidence type="ECO:0000255" key="1">
    <source>
        <dbReference type="HAMAP-Rule" id="MF_01569"/>
    </source>
</evidence>
<comment type="function">
    <text evidence="1">Catalyzes the attachment of proline to tRNA(Pro) in a two-step reaction: proline is first activated by ATP to form Pro-AMP and then transferred to the acceptor end of tRNA(Pro). As ProRS can inadvertently accommodate and process non-cognate amino acids such as alanine and cysteine, to avoid such errors it has two additional distinct editing activities against alanine. One activity is designated as 'pretransfer' editing and involves the tRNA(Pro)-independent hydrolysis of activated Ala-AMP. The other activity is designated 'posttransfer' editing and involves deacylation of mischarged Ala-tRNA(Pro). The misacylated Cys-tRNA(Pro) is not edited by ProRS.</text>
</comment>
<comment type="catalytic activity">
    <reaction evidence="1">
        <text>tRNA(Pro) + L-proline + ATP = L-prolyl-tRNA(Pro) + AMP + diphosphate</text>
        <dbReference type="Rhea" id="RHEA:14305"/>
        <dbReference type="Rhea" id="RHEA-COMP:9700"/>
        <dbReference type="Rhea" id="RHEA-COMP:9702"/>
        <dbReference type="ChEBI" id="CHEBI:30616"/>
        <dbReference type="ChEBI" id="CHEBI:33019"/>
        <dbReference type="ChEBI" id="CHEBI:60039"/>
        <dbReference type="ChEBI" id="CHEBI:78442"/>
        <dbReference type="ChEBI" id="CHEBI:78532"/>
        <dbReference type="ChEBI" id="CHEBI:456215"/>
        <dbReference type="EC" id="6.1.1.15"/>
    </reaction>
</comment>
<comment type="subunit">
    <text evidence="1">Homodimer.</text>
</comment>
<comment type="subcellular location">
    <subcellularLocation>
        <location evidence="1">Cytoplasm</location>
    </subcellularLocation>
</comment>
<comment type="domain">
    <text evidence="1">Consists of three domains: the N-terminal catalytic domain, the editing domain and the C-terminal anticodon-binding domain.</text>
</comment>
<comment type="similarity">
    <text evidence="1">Belongs to the class-II aminoacyl-tRNA synthetase family. ProS type 1 subfamily.</text>
</comment>
<feature type="chain" id="PRO_1000199356" description="Proline--tRNA ligase">
    <location>
        <begin position="1"/>
        <end position="576"/>
    </location>
</feature>